<keyword id="KW-0025">Alternative splicing</keyword>
<keyword id="KW-0112">Calmodulin-binding</keyword>
<keyword id="KW-0210">Decarboxylase</keyword>
<keyword id="KW-0456">Lyase</keyword>
<keyword id="KW-0663">Pyridoxal phosphate</keyword>
<keyword id="KW-1185">Reference proteome</keyword>
<reference key="1">
    <citation type="journal article" date="1998" name="Plant Mol. Biol.">
        <title>Two isoforms of glutamate decarboxylase in Arabidopsis are regulated by calcium/calmodulin and differ in organ distribution.</title>
        <authorList>
            <person name="Zik M."/>
            <person name="Arazi T."/>
            <person name="Snedden W.A."/>
            <person name="Fromm H."/>
        </authorList>
    </citation>
    <scope>NUCLEOTIDE SEQUENCE [MRNA]</scope>
    <scope>FUNCTION</scope>
    <scope>CATALYTIC ACTIVITY</scope>
    <scope>INTERACTION WITH CALMODULIN</scope>
    <scope>TISSUE SPECIFICITY</scope>
    <source>
        <strain>cv. Columbia</strain>
    </source>
</reference>
<reference key="2">
    <citation type="journal article" date="1997" name="Plant Physiol.">
        <title>Characterization and expression of NAD(H)-dependent glutamate dehydrogenase genes in Arabidopsis.</title>
        <authorList>
            <person name="Turano F.J."/>
            <person name="Thakkar S.S."/>
            <person name="Fang T."/>
            <person name="Weisemann J.M."/>
        </authorList>
    </citation>
    <scope>NUCLEOTIDE SEQUENCE [MRNA]</scope>
    <source>
        <strain>cv. Columbia</strain>
    </source>
</reference>
<reference key="3">
    <citation type="journal article" date="2000" name="Nature">
        <title>Sequence and analysis of chromosome 1 of the plant Arabidopsis thaliana.</title>
        <authorList>
            <person name="Theologis A."/>
            <person name="Ecker J.R."/>
            <person name="Palm C.J."/>
            <person name="Federspiel N.A."/>
            <person name="Kaul S."/>
            <person name="White O."/>
            <person name="Alonso J."/>
            <person name="Altafi H."/>
            <person name="Araujo R."/>
            <person name="Bowman C.L."/>
            <person name="Brooks S.Y."/>
            <person name="Buehler E."/>
            <person name="Chan A."/>
            <person name="Chao Q."/>
            <person name="Chen H."/>
            <person name="Cheuk R.F."/>
            <person name="Chin C.W."/>
            <person name="Chung M.K."/>
            <person name="Conn L."/>
            <person name="Conway A.B."/>
            <person name="Conway A.R."/>
            <person name="Creasy T.H."/>
            <person name="Dewar K."/>
            <person name="Dunn P."/>
            <person name="Etgu P."/>
            <person name="Feldblyum T.V."/>
            <person name="Feng J.-D."/>
            <person name="Fong B."/>
            <person name="Fujii C.Y."/>
            <person name="Gill J.E."/>
            <person name="Goldsmith A.D."/>
            <person name="Haas B."/>
            <person name="Hansen N.F."/>
            <person name="Hughes B."/>
            <person name="Huizar L."/>
            <person name="Hunter J.L."/>
            <person name="Jenkins J."/>
            <person name="Johnson-Hopson C."/>
            <person name="Khan S."/>
            <person name="Khaykin E."/>
            <person name="Kim C.J."/>
            <person name="Koo H.L."/>
            <person name="Kremenetskaia I."/>
            <person name="Kurtz D.B."/>
            <person name="Kwan A."/>
            <person name="Lam B."/>
            <person name="Langin-Hooper S."/>
            <person name="Lee A."/>
            <person name="Lee J.M."/>
            <person name="Lenz C.A."/>
            <person name="Li J.H."/>
            <person name="Li Y.-P."/>
            <person name="Lin X."/>
            <person name="Liu S.X."/>
            <person name="Liu Z.A."/>
            <person name="Luros J.S."/>
            <person name="Maiti R."/>
            <person name="Marziali A."/>
            <person name="Militscher J."/>
            <person name="Miranda M."/>
            <person name="Nguyen M."/>
            <person name="Nierman W.C."/>
            <person name="Osborne B.I."/>
            <person name="Pai G."/>
            <person name="Peterson J."/>
            <person name="Pham P.K."/>
            <person name="Rizzo M."/>
            <person name="Rooney T."/>
            <person name="Rowley D."/>
            <person name="Sakano H."/>
            <person name="Salzberg S.L."/>
            <person name="Schwartz J.R."/>
            <person name="Shinn P."/>
            <person name="Southwick A.M."/>
            <person name="Sun H."/>
            <person name="Tallon L.J."/>
            <person name="Tambunga G."/>
            <person name="Toriumi M.J."/>
            <person name="Town C.D."/>
            <person name="Utterback T."/>
            <person name="Van Aken S."/>
            <person name="Vaysberg M."/>
            <person name="Vysotskaia V.S."/>
            <person name="Walker M."/>
            <person name="Wu D."/>
            <person name="Yu G."/>
            <person name="Fraser C.M."/>
            <person name="Venter J.C."/>
            <person name="Davis R.W."/>
        </authorList>
    </citation>
    <scope>NUCLEOTIDE SEQUENCE [LARGE SCALE GENOMIC DNA]</scope>
    <source>
        <strain>cv. Columbia</strain>
    </source>
</reference>
<reference key="4">
    <citation type="journal article" date="2017" name="Plant J.">
        <title>Araport11: a complete reannotation of the Arabidopsis thaliana reference genome.</title>
        <authorList>
            <person name="Cheng C.Y."/>
            <person name="Krishnakumar V."/>
            <person name="Chan A.P."/>
            <person name="Thibaud-Nissen F."/>
            <person name="Schobel S."/>
            <person name="Town C.D."/>
        </authorList>
    </citation>
    <scope>GENOME REANNOTATION</scope>
    <source>
        <strain>cv. Columbia</strain>
    </source>
</reference>
<reference key="5">
    <citation type="journal article" date="2003" name="Science">
        <title>Empirical analysis of transcriptional activity in the Arabidopsis genome.</title>
        <authorList>
            <person name="Yamada K."/>
            <person name="Lim J."/>
            <person name="Dale J.M."/>
            <person name="Chen H."/>
            <person name="Shinn P."/>
            <person name="Palm C.J."/>
            <person name="Southwick A.M."/>
            <person name="Wu H.C."/>
            <person name="Kim C.J."/>
            <person name="Nguyen M."/>
            <person name="Pham P.K."/>
            <person name="Cheuk R.F."/>
            <person name="Karlin-Newmann G."/>
            <person name="Liu S.X."/>
            <person name="Lam B."/>
            <person name="Sakano H."/>
            <person name="Wu T."/>
            <person name="Yu G."/>
            <person name="Miranda M."/>
            <person name="Quach H.L."/>
            <person name="Tripp M."/>
            <person name="Chang C.H."/>
            <person name="Lee J.M."/>
            <person name="Toriumi M.J."/>
            <person name="Chan M.M."/>
            <person name="Tang C.C."/>
            <person name="Onodera C.S."/>
            <person name="Deng J.M."/>
            <person name="Akiyama K."/>
            <person name="Ansari Y."/>
            <person name="Arakawa T."/>
            <person name="Banh J."/>
            <person name="Banno F."/>
            <person name="Bowser L."/>
            <person name="Brooks S.Y."/>
            <person name="Carninci P."/>
            <person name="Chao Q."/>
            <person name="Choy N."/>
            <person name="Enju A."/>
            <person name="Goldsmith A.D."/>
            <person name="Gurjal M."/>
            <person name="Hansen N.F."/>
            <person name="Hayashizaki Y."/>
            <person name="Johnson-Hopson C."/>
            <person name="Hsuan V.W."/>
            <person name="Iida K."/>
            <person name="Karnes M."/>
            <person name="Khan S."/>
            <person name="Koesema E."/>
            <person name="Ishida J."/>
            <person name="Jiang P.X."/>
            <person name="Jones T."/>
            <person name="Kawai J."/>
            <person name="Kamiya A."/>
            <person name="Meyers C."/>
            <person name="Nakajima M."/>
            <person name="Narusaka M."/>
            <person name="Seki M."/>
            <person name="Sakurai T."/>
            <person name="Satou M."/>
            <person name="Tamse R."/>
            <person name="Vaysberg M."/>
            <person name="Wallender E.K."/>
            <person name="Wong C."/>
            <person name="Yamamura Y."/>
            <person name="Yuan S."/>
            <person name="Shinozaki K."/>
            <person name="Davis R.W."/>
            <person name="Theologis A."/>
            <person name="Ecker J.R."/>
        </authorList>
    </citation>
    <scope>NUCLEOTIDE SEQUENCE [LARGE SCALE MRNA]</scope>
    <source>
        <strain>cv. Columbia</strain>
    </source>
</reference>
<reference key="6">
    <citation type="journal article" date="1998" name="Plant Physiol.">
        <title>Characterization of two glutamate decarboxylase cDNA clones from Arabidopsis.</title>
        <authorList>
            <person name="Turano F.J."/>
            <person name="Fang T.K."/>
        </authorList>
    </citation>
    <scope>FUNCTION</scope>
    <scope>CATALYTIC ACTIVITY</scope>
    <scope>TISSUE SPECIFICITY</scope>
    <scope>INDUCTION BY NITROGEN</scope>
</reference>
<reference key="7">
    <citation type="journal article" date="2004" name="Plant Mol. Biol.">
        <title>The root-specific glutamate decarboxylase (GAD1) is essential for sustaining GABA levels in Arabidopsis.</title>
        <authorList>
            <person name="Bouche N."/>
            <person name="Fait A."/>
            <person name="Zik M."/>
            <person name="Fromm H."/>
        </authorList>
    </citation>
    <scope>DISRUPTION PHENOTYPE</scope>
    <source>
        <strain>cv. Columbia</strain>
    </source>
</reference>
<reference key="8">
    <citation type="journal article" date="2008" name="Plant Cell Physiol.">
        <title>Contribution of the GABA shunt to hypoxia-induced alanine accumulation in roots of Arabidopsis thaliana.</title>
        <authorList>
            <person name="Miyashita Y."/>
            <person name="Good A.G."/>
        </authorList>
    </citation>
    <scope>TISSUE SPECIFICITY</scope>
    <scope>INDUCTION BY HYPOXIA</scope>
</reference>
<reference key="9">
    <citation type="journal article" date="2009" name="J. Mol. Biol.">
        <title>A common structural basis for pH- and calmodulin-mediated regulation in plant glutamate decarboxylase.</title>
        <authorList>
            <person name="Gut H."/>
            <person name="Dominici P."/>
            <person name="Pilati S."/>
            <person name="Astegno A."/>
            <person name="Petoukhov M.V."/>
            <person name="Svergun D.I."/>
            <person name="Gruetter M.G."/>
            <person name="Capitani G."/>
        </authorList>
    </citation>
    <scope>BIOPHYSICOCHEMICAL PROPERTIES</scope>
    <scope>ACTIVITY REGULATION</scope>
</reference>
<reference key="10">
    <citation type="journal article" date="2010" name="BMC Plant Biol.">
        <title>The Arabidopsis pop2-1 mutant reveals the involvement of GABA transaminase in salt stress tolerance.</title>
        <authorList>
            <person name="Renault H."/>
            <person name="Roussel V."/>
            <person name="El Amrani A."/>
            <person name="Arzel M."/>
            <person name="Renault D."/>
            <person name="Bouchereau A."/>
            <person name="Deleu C."/>
        </authorList>
    </citation>
    <scope>INDUCTION BY SALT</scope>
</reference>
<accession>Q42472</accession>
<accession>Q8RXH0</accession>
<accession>Q944L6</accession>
<organism>
    <name type="scientific">Arabidopsis thaliana</name>
    <name type="common">Mouse-ear cress</name>
    <dbReference type="NCBI Taxonomy" id="3702"/>
    <lineage>
        <taxon>Eukaryota</taxon>
        <taxon>Viridiplantae</taxon>
        <taxon>Streptophyta</taxon>
        <taxon>Embryophyta</taxon>
        <taxon>Tracheophyta</taxon>
        <taxon>Spermatophyta</taxon>
        <taxon>Magnoliopsida</taxon>
        <taxon>eudicotyledons</taxon>
        <taxon>Gunneridae</taxon>
        <taxon>Pentapetalae</taxon>
        <taxon>rosids</taxon>
        <taxon>malvids</taxon>
        <taxon>Brassicales</taxon>
        <taxon>Brassicaceae</taxon>
        <taxon>Camelineae</taxon>
        <taxon>Arabidopsis</taxon>
    </lineage>
</organism>
<feature type="chain" id="PRO_0000146974" description="Glutamate decarboxylase 2">
    <location>
        <begin position="1"/>
        <end position="494"/>
    </location>
</feature>
<feature type="region of interest" description="Calmodulin-binding">
    <location>
        <begin position="463"/>
        <end position="494"/>
    </location>
</feature>
<feature type="site" description="Anchoring site for calmodulin binding; modulates the equilibrium between pyridoxal phosphate tautomers" evidence="1">
    <location>
        <position position="488"/>
    </location>
</feature>
<feature type="site" description="Anchoring site for calmodulin binding; modulates the equilibrium between pyridoxal phosphate tautomers" evidence="1">
    <location>
        <position position="489"/>
    </location>
</feature>
<feature type="modified residue" description="N6-(pyridoxal phosphate)lysine" evidence="1">
    <location>
        <position position="276"/>
    </location>
</feature>
<feature type="sequence conflict" description="In Ref. 5; AAL16126." evidence="10" ref="5">
    <original>A</original>
    <variation>V</variation>
    <location>
        <position position="410"/>
    </location>
</feature>
<feature type="sequence conflict" description="In Ref. 5; AAL91148." evidence="10" ref="5">
    <original>E</original>
    <variation>K</variation>
    <location>
        <position position="461"/>
    </location>
</feature>
<gene>
    <name type="primary">GAD2</name>
    <name type="synonym">GDH2</name>
    <name type="ordered locus">At1g65960</name>
    <name type="ORF">F12P19.12</name>
</gene>
<comment type="function">
    <text evidence="6 7">Catalyzes the conversion of glutamate to 4-aminobutanoate (GABA). The calmodulin-binding is calcium-dependent and it is proposed to directly or indirectly form a calcium regulated control of GABA biosynthesis.</text>
</comment>
<comment type="catalytic activity">
    <reaction evidence="11 12">
        <text>L-glutamate + H(+) = 4-aminobutanoate + CO2</text>
        <dbReference type="Rhea" id="RHEA:17785"/>
        <dbReference type="ChEBI" id="CHEBI:15378"/>
        <dbReference type="ChEBI" id="CHEBI:16526"/>
        <dbReference type="ChEBI" id="CHEBI:29985"/>
        <dbReference type="ChEBI" id="CHEBI:59888"/>
        <dbReference type="EC" id="4.1.1.15"/>
    </reaction>
    <physiologicalReaction direction="left-to-right" evidence="11 12">
        <dbReference type="Rhea" id="RHEA:17786"/>
    </physiologicalReaction>
</comment>
<comment type="cofactor">
    <cofactor>
        <name>pyridoxal 5'-phosphate</name>
        <dbReference type="ChEBI" id="CHEBI:597326"/>
    </cofactor>
</comment>
<comment type="activity regulation">
    <text evidence="4">Up-regulated by calmodulin binding at physiological pH.</text>
</comment>
<comment type="biophysicochemical properties">
    <phDependence>
        <text evidence="4">Optimum pH is 6.0.</text>
    </phDependence>
</comment>
<comment type="subunit">
    <text evidence="1 6">Homohexamer (By similarity). Interacts with calmodulin.</text>
</comment>
<comment type="alternative products">
    <event type="alternative splicing"/>
    <isoform>
        <id>Q42472-1</id>
        <name>1</name>
        <sequence type="displayed"/>
    </isoform>
    <text>A number of isoforms are produced. According to EST sequences.</text>
</comment>
<comment type="tissue specificity">
    <text evidence="3 6 7">Expressed in roots, inflorescence stems, flowers, siliques and leaves.</text>
</comment>
<comment type="induction">
    <text evidence="3 5 7">Up-regulated by salt treatment (PubMed:20122158). Up-regulated by nitrogen treatments such as ammonium chloride, ammonium nitrate, glutamate and glutamine but not by potassium nitrate (PubMed:9701597). Down-regulated by hypoxia (PubMed:18077464).</text>
</comment>
<comment type="domain">
    <text>The C-terminus (463-494) binds calmodulin in a calcium-dependent fashion.</text>
</comment>
<comment type="disruption phenotype">
    <text evidence="2">No visible phenotype.</text>
</comment>
<comment type="similarity">
    <text evidence="10">Belongs to the group II decarboxylase family.</text>
</comment>
<comment type="sequence caution" evidence="10">
    <conflict type="erroneous initiation">
        <sequence resource="EMBL-CDS" id="AAL91148"/>
    </conflict>
    <text>Truncated N-terminus.</text>
</comment>
<comment type="sequence caution" evidence="10">
    <conflict type="frameshift">
        <sequence resource="EMBL-CDS" id="AAL91148"/>
    </conflict>
</comment>
<proteinExistence type="evidence at protein level"/>
<sequence length="494" mass="56141">MVLTKTATNDESVCTMFGSRYVRTTLPKYEIGENSIPKDAAYQIIKDELMLDGNPRLNLASFVTTWMEPECDKLIMDSINKNYVDMDEYPVTTELQNRCVNIIARLFNAPLEESETAVGVGTVGSSEAIMLAGLAFKRKWQNKRKAEGKPYDKPNIVTGANVQVCWEKFARYFEVELKEVNLSEGYYVMDPDKAAEMVDENTICVAAILGSTLNGEFEDVKRLNDLLVKKNEETGWNTPIHVDAASGGFIAPFIYPELEWDFRLPLVKSINVSGHKYGLVYAGIGWVVWRAAEDLPEELIFHINYLGADQPTFTLNFSKGSSQIIAQYYQLIRLGFEGYKNVMENCIENMVVLKEGIEKTERFNIVSKDQGVPVVAFSLKDHSFHNEFEISEMLRRFGWIVPAYTMPADAQHITVLRVVIREDFSRTLAERLVADISKVLHELDTLPSKISKKMGIEGIAENVKEKKMEKEILMEVIVGWRKFVKERKKMNGVC</sequence>
<name>DCE2_ARATH</name>
<evidence type="ECO:0000250" key="1"/>
<evidence type="ECO:0000269" key="2">
    <source>
    </source>
</evidence>
<evidence type="ECO:0000269" key="3">
    <source>
    </source>
</evidence>
<evidence type="ECO:0000269" key="4">
    <source>
    </source>
</evidence>
<evidence type="ECO:0000269" key="5">
    <source>
    </source>
</evidence>
<evidence type="ECO:0000269" key="6">
    <source>
    </source>
</evidence>
<evidence type="ECO:0000269" key="7">
    <source>
    </source>
</evidence>
<evidence type="ECO:0000303" key="8">
    <source>
    </source>
</evidence>
<evidence type="ECO:0000303" key="9">
    <source>
    </source>
</evidence>
<evidence type="ECO:0000305" key="10"/>
<evidence type="ECO:0000305" key="11">
    <source>
    </source>
</evidence>
<evidence type="ECO:0000305" key="12">
    <source>
    </source>
</evidence>
<protein>
    <recommendedName>
        <fullName>Glutamate decarboxylase 2</fullName>
        <shortName evidence="8 9">GAD 2</shortName>
        <ecNumber evidence="11 12">4.1.1.15</ecNumber>
    </recommendedName>
</protein>
<dbReference type="EC" id="4.1.1.15" evidence="11 12"/>
<dbReference type="EMBL" id="U49937">
    <property type="protein sequence ID" value="AAC31617.1"/>
    <property type="molecule type" value="mRNA"/>
</dbReference>
<dbReference type="EMBL" id="U46665">
    <property type="protein sequence ID" value="AAC33485.1"/>
    <property type="molecule type" value="mRNA"/>
</dbReference>
<dbReference type="EMBL" id="AC009513">
    <property type="protein sequence ID" value="AAF06056.1"/>
    <property type="molecule type" value="Genomic_DNA"/>
</dbReference>
<dbReference type="EMBL" id="CP002684">
    <property type="protein sequence ID" value="AEE34445.1"/>
    <property type="molecule type" value="Genomic_DNA"/>
</dbReference>
<dbReference type="EMBL" id="AF428294">
    <property type="protein sequence ID" value="AAL16126.1"/>
    <property type="molecule type" value="mRNA"/>
</dbReference>
<dbReference type="EMBL" id="AF428372">
    <property type="protein sequence ID" value="AAL16302.1"/>
    <property type="molecule type" value="mRNA"/>
</dbReference>
<dbReference type="EMBL" id="AY124873">
    <property type="protein sequence ID" value="AAM70582.1"/>
    <property type="molecule type" value="mRNA"/>
</dbReference>
<dbReference type="EMBL" id="AY081259">
    <property type="protein sequence ID" value="AAL91148.1"/>
    <property type="status" value="ALT_SEQ"/>
    <property type="molecule type" value="mRNA"/>
</dbReference>
<dbReference type="PIR" id="H96683">
    <property type="entry name" value="H96683"/>
</dbReference>
<dbReference type="RefSeq" id="NP_001117556.1">
    <molecule id="Q42472-1"/>
    <property type="nucleotide sequence ID" value="NM_001124084.1"/>
</dbReference>
<dbReference type="SMR" id="Q42472"/>
<dbReference type="FunCoup" id="Q42472">
    <property type="interactions" value="733"/>
</dbReference>
<dbReference type="IntAct" id="Q42472">
    <property type="interactions" value="1"/>
</dbReference>
<dbReference type="STRING" id="3702.Q42472"/>
<dbReference type="iPTMnet" id="Q42472"/>
<dbReference type="MetOSite" id="Q42472"/>
<dbReference type="PaxDb" id="3702-AT1G65960.2"/>
<dbReference type="ProteomicsDB" id="224681">
    <molecule id="Q42472-1"/>
</dbReference>
<dbReference type="DNASU" id="842908"/>
<dbReference type="EnsemblPlants" id="AT1G65960.2">
    <molecule id="Q42472-1"/>
    <property type="protein sequence ID" value="AT1G65960.2"/>
    <property type="gene ID" value="AT1G65960"/>
</dbReference>
<dbReference type="GeneID" id="842908"/>
<dbReference type="Gramene" id="AT1G65960.2">
    <molecule id="Q42472-1"/>
    <property type="protein sequence ID" value="AT1G65960.2"/>
    <property type="gene ID" value="AT1G65960"/>
</dbReference>
<dbReference type="KEGG" id="ath:AT1G65960"/>
<dbReference type="Araport" id="AT1G65960"/>
<dbReference type="TAIR" id="AT1G65960">
    <property type="gene designation" value="GAD2"/>
</dbReference>
<dbReference type="eggNOG" id="KOG1383">
    <property type="taxonomic scope" value="Eukaryota"/>
</dbReference>
<dbReference type="HOGENOM" id="CLU_019582_2_2_1"/>
<dbReference type="InParanoid" id="Q42472"/>
<dbReference type="OMA" id="ESVCTMF"/>
<dbReference type="OrthoDB" id="5152799at2759"/>
<dbReference type="PhylomeDB" id="Q42472"/>
<dbReference type="BioCyc" id="ARA:AT1G65960-MONOMER"/>
<dbReference type="PRO" id="PR:Q42472"/>
<dbReference type="Proteomes" id="UP000006548">
    <property type="component" value="Chromosome 1"/>
</dbReference>
<dbReference type="ExpressionAtlas" id="Q42472">
    <property type="expression patterns" value="baseline and differential"/>
</dbReference>
<dbReference type="GO" id="GO:0005829">
    <property type="term" value="C:cytosol"/>
    <property type="evidence" value="ECO:0007005"/>
    <property type="project" value="TAIR"/>
</dbReference>
<dbReference type="GO" id="GO:0005634">
    <property type="term" value="C:nucleus"/>
    <property type="evidence" value="ECO:0007005"/>
    <property type="project" value="TAIR"/>
</dbReference>
<dbReference type="GO" id="GO:0005516">
    <property type="term" value="F:calmodulin binding"/>
    <property type="evidence" value="ECO:0007669"/>
    <property type="project" value="UniProtKB-KW"/>
</dbReference>
<dbReference type="GO" id="GO:0004351">
    <property type="term" value="F:glutamate decarboxylase activity"/>
    <property type="evidence" value="ECO:0000314"/>
    <property type="project" value="TAIR"/>
</dbReference>
<dbReference type="GO" id="GO:0030170">
    <property type="term" value="F:pyridoxal phosphate binding"/>
    <property type="evidence" value="ECO:0007669"/>
    <property type="project" value="InterPro"/>
</dbReference>
<dbReference type="GO" id="GO:0006536">
    <property type="term" value="P:glutamate metabolic process"/>
    <property type="evidence" value="ECO:0000314"/>
    <property type="project" value="TAIR"/>
</dbReference>
<dbReference type="CDD" id="cd06450">
    <property type="entry name" value="DOPA_deC_like"/>
    <property type="match status" value="1"/>
</dbReference>
<dbReference type="FunFam" id="3.40.640.10:FF:000022">
    <property type="entry name" value="Glutamate decarboxylase"/>
    <property type="match status" value="1"/>
</dbReference>
<dbReference type="FunFam" id="3.90.1150.160:FF:000001">
    <property type="entry name" value="Glutamate decarboxylase"/>
    <property type="match status" value="1"/>
</dbReference>
<dbReference type="FunFam" id="4.10.280.50:FF:000001">
    <property type="entry name" value="Glutamate decarboxylase"/>
    <property type="match status" value="1"/>
</dbReference>
<dbReference type="Gene3D" id="3.90.1150.160">
    <property type="match status" value="1"/>
</dbReference>
<dbReference type="Gene3D" id="4.10.280.50">
    <property type="match status" value="1"/>
</dbReference>
<dbReference type="Gene3D" id="3.40.640.10">
    <property type="entry name" value="Type I PLP-dependent aspartate aminotransferase-like (Major domain)"/>
    <property type="match status" value="1"/>
</dbReference>
<dbReference type="InterPro" id="IPR010107">
    <property type="entry name" value="Glutamate_decarboxylase"/>
</dbReference>
<dbReference type="InterPro" id="IPR002129">
    <property type="entry name" value="PyrdxlP-dep_de-COase"/>
</dbReference>
<dbReference type="InterPro" id="IPR015424">
    <property type="entry name" value="PyrdxlP-dep_Trfase"/>
</dbReference>
<dbReference type="InterPro" id="IPR015421">
    <property type="entry name" value="PyrdxlP-dep_Trfase_major"/>
</dbReference>
<dbReference type="NCBIfam" id="TIGR01788">
    <property type="entry name" value="Glu-decarb-GAD"/>
    <property type="match status" value="1"/>
</dbReference>
<dbReference type="PANTHER" id="PTHR43321">
    <property type="entry name" value="GLUTAMATE DECARBOXYLASE"/>
    <property type="match status" value="1"/>
</dbReference>
<dbReference type="PANTHER" id="PTHR43321:SF19">
    <property type="entry name" value="GLUTAMATE DECARBOXYLASE 2"/>
    <property type="match status" value="1"/>
</dbReference>
<dbReference type="Pfam" id="PF00282">
    <property type="entry name" value="Pyridoxal_deC"/>
    <property type="match status" value="1"/>
</dbReference>
<dbReference type="SUPFAM" id="SSF53383">
    <property type="entry name" value="PLP-dependent transferases"/>
    <property type="match status" value="1"/>
</dbReference>